<sequence length="268" mass="28877">MGLTRRIIPCLDLKAGRVVKGVNFEGLRDAGDPVELASRYNEQGADEVVFLDIAASKDNRDTMIDVIGRAADELFLPLTVGGGIRTVKDIQDILRAGADKVSLNTSAVKTPDVINEGSHLFGNQCIVLAEDVRRNYEMRDGVTPIHLADGRVCWYEVVIYGGSQRTGIDAVSWAQEGVKRGAGEILLTSMETDGVKTGFDLEITAAISENVDVPVIASGGVGTLEHFYDGFVKGKADACLAASVFHYGEMTIRSVKEYLASRGVLVRL</sequence>
<feature type="chain" id="PRO_0000319463" description="Imidazole glycerol phosphate synthase subunit HisF">
    <location>
        <begin position="1"/>
        <end position="268"/>
    </location>
</feature>
<feature type="active site" evidence="1">
    <location>
        <position position="12"/>
    </location>
</feature>
<feature type="active site" evidence="1">
    <location>
        <position position="131"/>
    </location>
</feature>
<reference key="1">
    <citation type="journal article" date="2009" name="Stand. Genomic Sci.">
        <title>Complete genome sequence of Methanocorpusculum labreanum type strain Z.</title>
        <authorList>
            <person name="Anderson I.J."/>
            <person name="Sieprawska-Lupa M."/>
            <person name="Goltsman E."/>
            <person name="Lapidus A."/>
            <person name="Copeland A."/>
            <person name="Glavina Del Rio T."/>
            <person name="Tice H."/>
            <person name="Dalin E."/>
            <person name="Barry K."/>
            <person name="Pitluck S."/>
            <person name="Hauser L."/>
            <person name="Land M."/>
            <person name="Lucas S."/>
            <person name="Richardson P."/>
            <person name="Whitman W.B."/>
            <person name="Kyrpides N.C."/>
        </authorList>
    </citation>
    <scope>NUCLEOTIDE SEQUENCE [LARGE SCALE GENOMIC DNA]</scope>
    <source>
        <strain>ATCC 43576 / DSM 4855 / Z</strain>
    </source>
</reference>
<protein>
    <recommendedName>
        <fullName evidence="1">Imidazole glycerol phosphate synthase subunit HisF</fullName>
        <ecNumber evidence="1">4.3.2.10</ecNumber>
    </recommendedName>
    <alternativeName>
        <fullName evidence="1">IGP synthase cyclase subunit</fullName>
    </alternativeName>
    <alternativeName>
        <fullName evidence="1">IGP synthase subunit HisF</fullName>
    </alternativeName>
    <alternativeName>
        <fullName evidence="1">ImGP synthase subunit HisF</fullName>
        <shortName evidence="1">IGPS subunit HisF</shortName>
    </alternativeName>
</protein>
<comment type="function">
    <text evidence="1">IGPS catalyzes the conversion of PRFAR and glutamine to IGP, AICAR and glutamate. The HisF subunit catalyzes the cyclization activity that produces IGP and AICAR from PRFAR using the ammonia provided by the HisH subunit.</text>
</comment>
<comment type="catalytic activity">
    <reaction evidence="1">
        <text>5-[(5-phospho-1-deoxy-D-ribulos-1-ylimino)methylamino]-1-(5-phospho-beta-D-ribosyl)imidazole-4-carboxamide + L-glutamine = D-erythro-1-(imidazol-4-yl)glycerol 3-phosphate + 5-amino-1-(5-phospho-beta-D-ribosyl)imidazole-4-carboxamide + L-glutamate + H(+)</text>
        <dbReference type="Rhea" id="RHEA:24793"/>
        <dbReference type="ChEBI" id="CHEBI:15378"/>
        <dbReference type="ChEBI" id="CHEBI:29985"/>
        <dbReference type="ChEBI" id="CHEBI:58278"/>
        <dbReference type="ChEBI" id="CHEBI:58359"/>
        <dbReference type="ChEBI" id="CHEBI:58475"/>
        <dbReference type="ChEBI" id="CHEBI:58525"/>
        <dbReference type="EC" id="4.3.2.10"/>
    </reaction>
</comment>
<comment type="pathway">
    <text evidence="1">Amino-acid biosynthesis; L-histidine biosynthesis; L-histidine from 5-phospho-alpha-D-ribose 1-diphosphate: step 5/9.</text>
</comment>
<comment type="subunit">
    <text evidence="1">Heterodimer of HisH and HisF.</text>
</comment>
<comment type="subcellular location">
    <subcellularLocation>
        <location evidence="1">Cytoplasm</location>
    </subcellularLocation>
</comment>
<comment type="similarity">
    <text evidence="1">Belongs to the HisA/HisF family.</text>
</comment>
<dbReference type="EC" id="4.3.2.10" evidence="1"/>
<dbReference type="EMBL" id="CP000559">
    <property type="protein sequence ID" value="ABN07574.1"/>
    <property type="molecule type" value="Genomic_DNA"/>
</dbReference>
<dbReference type="RefSeq" id="WP_011833777.1">
    <property type="nucleotide sequence ID" value="NC_008942.1"/>
</dbReference>
<dbReference type="SMR" id="A2STB8"/>
<dbReference type="STRING" id="410358.Mlab_1408"/>
<dbReference type="GeneID" id="4796194"/>
<dbReference type="KEGG" id="mla:Mlab_1408"/>
<dbReference type="eggNOG" id="arCOG00617">
    <property type="taxonomic scope" value="Archaea"/>
</dbReference>
<dbReference type="HOGENOM" id="CLU_048577_4_0_2"/>
<dbReference type="OrthoDB" id="6261at2157"/>
<dbReference type="UniPathway" id="UPA00031">
    <property type="reaction ID" value="UER00010"/>
</dbReference>
<dbReference type="Proteomes" id="UP000000365">
    <property type="component" value="Chromosome"/>
</dbReference>
<dbReference type="GO" id="GO:0005737">
    <property type="term" value="C:cytoplasm"/>
    <property type="evidence" value="ECO:0007669"/>
    <property type="project" value="UniProtKB-SubCell"/>
</dbReference>
<dbReference type="GO" id="GO:0000107">
    <property type="term" value="F:imidazoleglycerol-phosphate synthase activity"/>
    <property type="evidence" value="ECO:0007669"/>
    <property type="project" value="UniProtKB-UniRule"/>
</dbReference>
<dbReference type="GO" id="GO:0016829">
    <property type="term" value="F:lyase activity"/>
    <property type="evidence" value="ECO:0007669"/>
    <property type="project" value="UniProtKB-KW"/>
</dbReference>
<dbReference type="GO" id="GO:0000105">
    <property type="term" value="P:L-histidine biosynthetic process"/>
    <property type="evidence" value="ECO:0007669"/>
    <property type="project" value="UniProtKB-UniRule"/>
</dbReference>
<dbReference type="CDD" id="cd04731">
    <property type="entry name" value="HisF"/>
    <property type="match status" value="1"/>
</dbReference>
<dbReference type="FunFam" id="3.20.20.70:FF:000006">
    <property type="entry name" value="Imidazole glycerol phosphate synthase subunit HisF"/>
    <property type="match status" value="1"/>
</dbReference>
<dbReference type="Gene3D" id="3.20.20.70">
    <property type="entry name" value="Aldolase class I"/>
    <property type="match status" value="1"/>
</dbReference>
<dbReference type="HAMAP" id="MF_01013">
    <property type="entry name" value="HisF"/>
    <property type="match status" value="1"/>
</dbReference>
<dbReference type="InterPro" id="IPR013785">
    <property type="entry name" value="Aldolase_TIM"/>
</dbReference>
<dbReference type="InterPro" id="IPR006062">
    <property type="entry name" value="His_biosynth"/>
</dbReference>
<dbReference type="InterPro" id="IPR004651">
    <property type="entry name" value="HisF"/>
</dbReference>
<dbReference type="InterPro" id="IPR050064">
    <property type="entry name" value="IGPS_HisA/HisF"/>
</dbReference>
<dbReference type="InterPro" id="IPR011060">
    <property type="entry name" value="RibuloseP-bd_barrel"/>
</dbReference>
<dbReference type="NCBIfam" id="TIGR00735">
    <property type="entry name" value="hisF"/>
    <property type="match status" value="1"/>
</dbReference>
<dbReference type="PANTHER" id="PTHR21235:SF2">
    <property type="entry name" value="IMIDAZOLE GLYCEROL PHOSPHATE SYNTHASE HISHF"/>
    <property type="match status" value="1"/>
</dbReference>
<dbReference type="PANTHER" id="PTHR21235">
    <property type="entry name" value="IMIDAZOLE GLYCEROL PHOSPHATE SYNTHASE SUBUNIT HISF/H IGP SYNTHASE SUBUNIT HISF/H"/>
    <property type="match status" value="1"/>
</dbReference>
<dbReference type="Pfam" id="PF00977">
    <property type="entry name" value="His_biosynth"/>
    <property type="match status" value="1"/>
</dbReference>
<dbReference type="SUPFAM" id="SSF51366">
    <property type="entry name" value="Ribulose-phoshate binding barrel"/>
    <property type="match status" value="1"/>
</dbReference>
<accession>A2STB8</accession>
<organism>
    <name type="scientific">Methanocorpusculum labreanum (strain ATCC 43576 / DSM 4855 / Z)</name>
    <dbReference type="NCBI Taxonomy" id="410358"/>
    <lineage>
        <taxon>Archaea</taxon>
        <taxon>Methanobacteriati</taxon>
        <taxon>Methanobacteriota</taxon>
        <taxon>Stenosarchaea group</taxon>
        <taxon>Methanomicrobia</taxon>
        <taxon>Methanomicrobiales</taxon>
        <taxon>Methanocorpusculaceae</taxon>
        <taxon>Methanocorpusculum</taxon>
    </lineage>
</organism>
<keyword id="KW-0028">Amino-acid biosynthesis</keyword>
<keyword id="KW-0963">Cytoplasm</keyword>
<keyword id="KW-0368">Histidine biosynthesis</keyword>
<keyword id="KW-0456">Lyase</keyword>
<keyword id="KW-1185">Reference proteome</keyword>
<gene>
    <name evidence="1" type="primary">hisF</name>
    <name type="ordered locus">Mlab_1408</name>
</gene>
<name>HIS6_METLZ</name>
<proteinExistence type="inferred from homology"/>
<evidence type="ECO:0000255" key="1">
    <source>
        <dbReference type="HAMAP-Rule" id="MF_01013"/>
    </source>
</evidence>